<keyword id="KW-0028">Amino-acid biosynthesis</keyword>
<keyword id="KW-0067">ATP-binding</keyword>
<keyword id="KW-0418">Kinase</keyword>
<keyword id="KW-0486">Methionine biosynthesis</keyword>
<keyword id="KW-0547">Nucleotide-binding</keyword>
<keyword id="KW-0808">Transferase</keyword>
<organism>
    <name type="scientific">Bacillus velezensis (strain DSM 23117 / BGSC 10A6 / LMG 26770 / FZB42)</name>
    <name type="common">Bacillus amyloliquefaciens subsp. plantarum</name>
    <dbReference type="NCBI Taxonomy" id="326423"/>
    <lineage>
        <taxon>Bacteria</taxon>
        <taxon>Bacillati</taxon>
        <taxon>Bacillota</taxon>
        <taxon>Bacilli</taxon>
        <taxon>Bacillales</taxon>
        <taxon>Bacillaceae</taxon>
        <taxon>Bacillus</taxon>
        <taxon>Bacillus amyloliquefaciens group</taxon>
    </lineage>
</organism>
<evidence type="ECO:0000255" key="1">
    <source>
        <dbReference type="HAMAP-Rule" id="MF_01683"/>
    </source>
</evidence>
<accession>A7Z3X1</accession>
<sequence length="394" mass="44756">MSATKTSLYEQLTESSAAALAVKLGLFQSKSTLTCREIGDGNLNYVFHVYDKENKKGLIIKQAIPYAKVVGESWPLTIDRARIESSALIRQGEHVPHLVPAVYYSDTEMAVTVMEDLSHLRISRKGLLEGQHYPNLSAHIGEFLGKTLFYSSDYALDAKVKQQLAKQFTNPELCNITERLVFTEPFLDHETNDFEEELRPYAEKVWNNSRLKEGADELKAIFLNSAETLVHGDLHTGSIFADEHETKVIDPEFAFFGPIGFDIGQFIANLLLNALSRDGDDRQPLYDHTAAVWDTFVKTFSEAWEKDCLPSRRHLLEDTLKNAFEEAVGFAGCELIRRTIGLAHVADLDEITPFDKRIERKKLALDIGAYYIENRKELKHITEVLDQFKLRVKE</sequence>
<reference key="1">
    <citation type="journal article" date="2007" name="Nat. Biotechnol.">
        <title>Comparative analysis of the complete genome sequence of the plant growth-promoting bacterium Bacillus amyloliquefaciens FZB42.</title>
        <authorList>
            <person name="Chen X.H."/>
            <person name="Koumoutsi A."/>
            <person name="Scholz R."/>
            <person name="Eisenreich A."/>
            <person name="Schneider K."/>
            <person name="Heinemeyer I."/>
            <person name="Morgenstern B."/>
            <person name="Voss B."/>
            <person name="Hess W.R."/>
            <person name="Reva O."/>
            <person name="Junge H."/>
            <person name="Voigt B."/>
            <person name="Jungblut P.R."/>
            <person name="Vater J."/>
            <person name="Suessmuth R."/>
            <person name="Liesegang H."/>
            <person name="Strittmatter A."/>
            <person name="Gottschalk G."/>
            <person name="Borriss R."/>
        </authorList>
    </citation>
    <scope>NUCLEOTIDE SEQUENCE [LARGE SCALE GENOMIC DNA]</scope>
    <source>
        <strain>DSM 23117 / BGSC 10A6 / LMG 26770 / FZB42</strain>
    </source>
</reference>
<protein>
    <recommendedName>
        <fullName evidence="1">Methylthioribose kinase</fullName>
        <shortName evidence="1">MTR kinase</shortName>
        <ecNumber evidence="1">2.7.1.100</ecNumber>
    </recommendedName>
</protein>
<name>MTNK_BACVZ</name>
<gene>
    <name evidence="1" type="primary">mtnK</name>
    <name type="ordered locus">RBAM_013340</name>
</gene>
<feature type="chain" id="PRO_0000357329" description="Methylthioribose kinase">
    <location>
        <begin position="1"/>
        <end position="394"/>
    </location>
</feature>
<feature type="binding site" evidence="1">
    <location>
        <position position="44"/>
    </location>
    <ligand>
        <name>ATP</name>
        <dbReference type="ChEBI" id="CHEBI:30616"/>
    </ligand>
</feature>
<feature type="binding site" evidence="1">
    <location>
        <position position="61"/>
    </location>
    <ligand>
        <name>ATP</name>
        <dbReference type="ChEBI" id="CHEBI:30616"/>
    </ligand>
</feature>
<feature type="binding site" evidence="1">
    <location>
        <begin position="115"/>
        <end position="117"/>
    </location>
    <ligand>
        <name>ATP</name>
        <dbReference type="ChEBI" id="CHEBI:30616"/>
    </ligand>
</feature>
<feature type="binding site" evidence="1">
    <location>
        <position position="233"/>
    </location>
    <ligand>
        <name>substrate</name>
    </ligand>
</feature>
<feature type="binding site" evidence="1">
    <location>
        <begin position="250"/>
        <end position="252"/>
    </location>
    <ligand>
        <name>ATP</name>
        <dbReference type="ChEBI" id="CHEBI:30616"/>
    </ligand>
</feature>
<feature type="binding site" evidence="1">
    <location>
        <position position="337"/>
    </location>
    <ligand>
        <name>substrate</name>
    </ligand>
</feature>
<comment type="function">
    <text evidence="1">Catalyzes the phosphorylation of methylthioribose into methylthioribose-1-phosphate.</text>
</comment>
<comment type="catalytic activity">
    <reaction evidence="1">
        <text>5-(methylsulfanyl)-D-ribose + ATP = 5-(methylsulfanyl)-alpha-D-ribose 1-phosphate + ADP + H(+)</text>
        <dbReference type="Rhea" id="RHEA:22312"/>
        <dbReference type="ChEBI" id="CHEBI:15378"/>
        <dbReference type="ChEBI" id="CHEBI:30616"/>
        <dbReference type="ChEBI" id="CHEBI:58533"/>
        <dbReference type="ChEBI" id="CHEBI:78440"/>
        <dbReference type="ChEBI" id="CHEBI:456216"/>
        <dbReference type="EC" id="2.7.1.100"/>
    </reaction>
</comment>
<comment type="pathway">
    <text evidence="1">Amino-acid biosynthesis; L-methionine biosynthesis via salvage pathway; S-methyl-5-thio-alpha-D-ribose 1-phosphate from S-methyl-5'-thioadenosine (hydrolase route): step 2/2.</text>
</comment>
<comment type="subunit">
    <text evidence="1">Homodimer.</text>
</comment>
<comment type="similarity">
    <text evidence="1">Belongs to the methylthioribose kinase family.</text>
</comment>
<proteinExistence type="inferred from homology"/>
<dbReference type="EC" id="2.7.1.100" evidence="1"/>
<dbReference type="EMBL" id="CP000560">
    <property type="protein sequence ID" value="ABS73697.1"/>
    <property type="molecule type" value="Genomic_DNA"/>
</dbReference>
<dbReference type="RefSeq" id="WP_012117410.1">
    <property type="nucleotide sequence ID" value="NC_009725.2"/>
</dbReference>
<dbReference type="SMR" id="A7Z3X1"/>
<dbReference type="GeneID" id="93080469"/>
<dbReference type="KEGG" id="bay:RBAM_013340"/>
<dbReference type="HOGENOM" id="CLU_033681_0_0_9"/>
<dbReference type="UniPathway" id="UPA00904">
    <property type="reaction ID" value="UER00872"/>
</dbReference>
<dbReference type="Proteomes" id="UP000001120">
    <property type="component" value="Chromosome"/>
</dbReference>
<dbReference type="GO" id="GO:0005524">
    <property type="term" value="F:ATP binding"/>
    <property type="evidence" value="ECO:0007669"/>
    <property type="project" value="UniProtKB-UniRule"/>
</dbReference>
<dbReference type="GO" id="GO:0046522">
    <property type="term" value="F:S-methyl-5-thioribose kinase activity"/>
    <property type="evidence" value="ECO:0007669"/>
    <property type="project" value="UniProtKB-UniRule"/>
</dbReference>
<dbReference type="GO" id="GO:0019509">
    <property type="term" value="P:L-methionine salvage from methylthioadenosine"/>
    <property type="evidence" value="ECO:0007669"/>
    <property type="project" value="UniProtKB-UniRule"/>
</dbReference>
<dbReference type="Gene3D" id="3.90.1200.10">
    <property type="match status" value="1"/>
</dbReference>
<dbReference type="Gene3D" id="3.30.200.20">
    <property type="entry name" value="Phosphorylase Kinase, domain 1"/>
    <property type="match status" value="1"/>
</dbReference>
<dbReference type="HAMAP" id="MF_01683">
    <property type="entry name" value="Salvage_MtnK"/>
    <property type="match status" value="1"/>
</dbReference>
<dbReference type="InterPro" id="IPR002575">
    <property type="entry name" value="Aminoglycoside_PTrfase"/>
</dbReference>
<dbReference type="InterPro" id="IPR011009">
    <property type="entry name" value="Kinase-like_dom_sf"/>
</dbReference>
<dbReference type="InterPro" id="IPR009212">
    <property type="entry name" value="Methylthioribose_kinase"/>
</dbReference>
<dbReference type="NCBIfam" id="TIGR01767">
    <property type="entry name" value="MTRK"/>
    <property type="match status" value="1"/>
</dbReference>
<dbReference type="PANTHER" id="PTHR34273">
    <property type="entry name" value="METHYLTHIORIBOSE KINASE"/>
    <property type="match status" value="1"/>
</dbReference>
<dbReference type="PANTHER" id="PTHR34273:SF2">
    <property type="entry name" value="METHYLTHIORIBOSE KINASE"/>
    <property type="match status" value="1"/>
</dbReference>
<dbReference type="Pfam" id="PF01636">
    <property type="entry name" value="APH"/>
    <property type="match status" value="1"/>
</dbReference>
<dbReference type="PIRSF" id="PIRSF031134">
    <property type="entry name" value="MTRK"/>
    <property type="match status" value="1"/>
</dbReference>
<dbReference type="SUPFAM" id="SSF56112">
    <property type="entry name" value="Protein kinase-like (PK-like)"/>
    <property type="match status" value="1"/>
</dbReference>